<name>YD246_YEAST</name>
<evidence type="ECO:0000255" key="1"/>
<keyword id="KW-1185">Reference proteome</keyword>
<keyword id="KW-0732">Signal</keyword>
<accession>Q3E763</accession>
<accession>D6VSM7</accession>
<feature type="signal peptide" evidence="1">
    <location>
        <begin position="1"/>
        <end position="19"/>
    </location>
</feature>
<feature type="chain" id="PRO_0000253840" description="Uncharacterized protein YDR246W-A">
    <location>
        <begin position="20"/>
        <end position="66"/>
    </location>
</feature>
<dbReference type="EMBL" id="Z49701">
    <property type="status" value="NOT_ANNOTATED_CDS"/>
    <property type="molecule type" value="Genomic_DNA"/>
</dbReference>
<dbReference type="EMBL" id="BK006938">
    <property type="protein sequence ID" value="DAA12087.1"/>
    <property type="molecule type" value="Genomic_DNA"/>
</dbReference>
<dbReference type="RefSeq" id="NP_878065.3">
    <property type="nucleotide sequence ID" value="NM_001184547.3"/>
</dbReference>
<dbReference type="BioGRID" id="36978">
    <property type="interactions" value="2"/>
</dbReference>
<dbReference type="FunCoup" id="Q3E763">
    <property type="interactions" value="15"/>
</dbReference>
<dbReference type="STRING" id="4932.YDR246W-A"/>
<dbReference type="PaxDb" id="4932-YDR246W-A"/>
<dbReference type="TopDownProteomics" id="Q3E763"/>
<dbReference type="EnsemblFungi" id="YDR246W-A_mRNA">
    <property type="protein sequence ID" value="YDR246W-A"/>
    <property type="gene ID" value="YDR246W-A"/>
</dbReference>
<dbReference type="GeneID" id="1466436"/>
<dbReference type="KEGG" id="sce:YDR246W-A"/>
<dbReference type="AGR" id="SGD:S000028542"/>
<dbReference type="SGD" id="S000028542">
    <property type="gene designation" value="YDR246W-A"/>
</dbReference>
<dbReference type="VEuPathDB" id="FungiDB:YDR246W-A"/>
<dbReference type="HOGENOM" id="CLU_2832612_0_0_1"/>
<dbReference type="InParanoid" id="Q3E763"/>
<dbReference type="OrthoDB" id="10270474at2759"/>
<dbReference type="BioCyc" id="YEAST:G3O-30119-MONOMER"/>
<dbReference type="BioGRID-ORCS" id="1466436">
    <property type="hits" value="3 hits in 10 CRISPR screens"/>
</dbReference>
<dbReference type="PRO" id="PR:Q3E763"/>
<dbReference type="Proteomes" id="UP000002311">
    <property type="component" value="Chromosome IV"/>
</dbReference>
<dbReference type="RNAct" id="Q3E763">
    <property type="molecule type" value="protein"/>
</dbReference>
<organism>
    <name type="scientific">Saccharomyces cerevisiae (strain ATCC 204508 / S288c)</name>
    <name type="common">Baker's yeast</name>
    <dbReference type="NCBI Taxonomy" id="559292"/>
    <lineage>
        <taxon>Eukaryota</taxon>
        <taxon>Fungi</taxon>
        <taxon>Dikarya</taxon>
        <taxon>Ascomycota</taxon>
        <taxon>Saccharomycotina</taxon>
        <taxon>Saccharomycetes</taxon>
        <taxon>Saccharomycetales</taxon>
        <taxon>Saccharomycetaceae</taxon>
        <taxon>Saccharomyces</taxon>
    </lineage>
</organism>
<sequence>MRRLYRHLASFFLLPSCPGNTIQSITSYPANALLRSFRHVSTETPVRNRVHNRDSQSCPFFPLMDD</sequence>
<gene>
    <name type="ordered locus">YDR246W-A</name>
    <name type="ORF">smORF127</name>
</gene>
<reference key="1">
    <citation type="journal article" date="1997" name="Nature">
        <title>The nucleotide sequence of Saccharomyces cerevisiae chromosome IV.</title>
        <authorList>
            <person name="Jacq C."/>
            <person name="Alt-Moerbe J."/>
            <person name="Andre B."/>
            <person name="Arnold W."/>
            <person name="Bahr A."/>
            <person name="Ballesta J.P.G."/>
            <person name="Bargues M."/>
            <person name="Baron L."/>
            <person name="Becker A."/>
            <person name="Biteau N."/>
            <person name="Bloecker H."/>
            <person name="Blugeon C."/>
            <person name="Boskovic J."/>
            <person name="Brandt P."/>
            <person name="Brueckner M."/>
            <person name="Buitrago M.J."/>
            <person name="Coster F."/>
            <person name="Delaveau T."/>
            <person name="del Rey F."/>
            <person name="Dujon B."/>
            <person name="Eide L.G."/>
            <person name="Garcia-Cantalejo J.M."/>
            <person name="Goffeau A."/>
            <person name="Gomez-Peris A."/>
            <person name="Granotier C."/>
            <person name="Hanemann V."/>
            <person name="Hankeln T."/>
            <person name="Hoheisel J.D."/>
            <person name="Jaeger W."/>
            <person name="Jimenez A."/>
            <person name="Jonniaux J.-L."/>
            <person name="Kraemer C."/>
            <person name="Kuester H."/>
            <person name="Laamanen P."/>
            <person name="Legros Y."/>
            <person name="Louis E.J."/>
            <person name="Moeller-Rieker S."/>
            <person name="Monnet A."/>
            <person name="Moro M."/>
            <person name="Mueller-Auer S."/>
            <person name="Nussbaumer B."/>
            <person name="Paricio N."/>
            <person name="Paulin L."/>
            <person name="Perea J."/>
            <person name="Perez-Alonso M."/>
            <person name="Perez-Ortin J.E."/>
            <person name="Pohl T.M."/>
            <person name="Prydz H."/>
            <person name="Purnelle B."/>
            <person name="Rasmussen S.W."/>
            <person name="Remacha M.A."/>
            <person name="Revuelta J.L."/>
            <person name="Rieger M."/>
            <person name="Salom D."/>
            <person name="Saluz H.P."/>
            <person name="Saiz J.E."/>
            <person name="Saren A.-M."/>
            <person name="Schaefer M."/>
            <person name="Scharfe M."/>
            <person name="Schmidt E.R."/>
            <person name="Schneider C."/>
            <person name="Scholler P."/>
            <person name="Schwarz S."/>
            <person name="Soler-Mira A."/>
            <person name="Urrestarazu L.A."/>
            <person name="Verhasselt P."/>
            <person name="Vissers S."/>
            <person name="Voet M."/>
            <person name="Volckaert G."/>
            <person name="Wagner G."/>
            <person name="Wambutt R."/>
            <person name="Wedler E."/>
            <person name="Wedler H."/>
            <person name="Woelfl S."/>
            <person name="Harris D.E."/>
            <person name="Bowman S."/>
            <person name="Brown D."/>
            <person name="Churcher C.M."/>
            <person name="Connor R."/>
            <person name="Dedman K."/>
            <person name="Gentles S."/>
            <person name="Hamlin N."/>
            <person name="Hunt S."/>
            <person name="Jones L."/>
            <person name="McDonald S."/>
            <person name="Murphy L.D."/>
            <person name="Niblett D."/>
            <person name="Odell C."/>
            <person name="Oliver K."/>
            <person name="Rajandream M.A."/>
            <person name="Richards C."/>
            <person name="Shore L."/>
            <person name="Walsh S.V."/>
            <person name="Barrell B.G."/>
            <person name="Dietrich F.S."/>
            <person name="Mulligan J.T."/>
            <person name="Allen E."/>
            <person name="Araujo R."/>
            <person name="Aviles E."/>
            <person name="Berno A."/>
            <person name="Carpenter J."/>
            <person name="Chen E."/>
            <person name="Cherry J.M."/>
            <person name="Chung E."/>
            <person name="Duncan M."/>
            <person name="Hunicke-Smith S."/>
            <person name="Hyman R.W."/>
            <person name="Komp C."/>
            <person name="Lashkari D."/>
            <person name="Lew H."/>
            <person name="Lin D."/>
            <person name="Mosedale D."/>
            <person name="Nakahara K."/>
            <person name="Namath A."/>
            <person name="Oefner P."/>
            <person name="Oh C."/>
            <person name="Petel F.X."/>
            <person name="Roberts D."/>
            <person name="Schramm S."/>
            <person name="Schroeder M."/>
            <person name="Shogren T."/>
            <person name="Shroff N."/>
            <person name="Winant A."/>
            <person name="Yelton M.A."/>
            <person name="Botstein D."/>
            <person name="Davis R.W."/>
            <person name="Johnston M."/>
            <person name="Andrews S."/>
            <person name="Brinkman R."/>
            <person name="Cooper J."/>
            <person name="Ding H."/>
            <person name="Du Z."/>
            <person name="Favello A."/>
            <person name="Fulton L."/>
            <person name="Gattung S."/>
            <person name="Greco T."/>
            <person name="Hallsworth K."/>
            <person name="Hawkins J."/>
            <person name="Hillier L.W."/>
            <person name="Jier M."/>
            <person name="Johnson D."/>
            <person name="Johnston L."/>
            <person name="Kirsten J."/>
            <person name="Kucaba T."/>
            <person name="Langston Y."/>
            <person name="Latreille P."/>
            <person name="Le T."/>
            <person name="Mardis E."/>
            <person name="Menezes S."/>
            <person name="Miller N."/>
            <person name="Nhan M."/>
            <person name="Pauley A."/>
            <person name="Peluso D."/>
            <person name="Rifkin L."/>
            <person name="Riles L."/>
            <person name="Taich A."/>
            <person name="Trevaskis E."/>
            <person name="Vignati D."/>
            <person name="Wilcox L."/>
            <person name="Wohldman P."/>
            <person name="Vaudin M."/>
            <person name="Wilson R."/>
            <person name="Waterston R."/>
            <person name="Albermann K."/>
            <person name="Hani J."/>
            <person name="Heumann K."/>
            <person name="Kleine K."/>
            <person name="Mewes H.-W."/>
            <person name="Zollner A."/>
            <person name="Zaccaria P."/>
        </authorList>
    </citation>
    <scope>NUCLEOTIDE SEQUENCE [LARGE SCALE GENOMIC DNA]</scope>
    <source>
        <strain>ATCC 204508 / S288c</strain>
    </source>
</reference>
<reference key="2">
    <citation type="journal article" date="2014" name="G3 (Bethesda)">
        <title>The reference genome sequence of Saccharomyces cerevisiae: Then and now.</title>
        <authorList>
            <person name="Engel S.R."/>
            <person name="Dietrich F.S."/>
            <person name="Fisk D.G."/>
            <person name="Binkley G."/>
            <person name="Balakrishnan R."/>
            <person name="Costanzo M.C."/>
            <person name="Dwight S.S."/>
            <person name="Hitz B.C."/>
            <person name="Karra K."/>
            <person name="Nash R.S."/>
            <person name="Weng S."/>
            <person name="Wong E.D."/>
            <person name="Lloyd P."/>
            <person name="Skrzypek M.S."/>
            <person name="Miyasato S.R."/>
            <person name="Simison M."/>
            <person name="Cherry J.M."/>
        </authorList>
    </citation>
    <scope>GENOME REANNOTATION</scope>
    <source>
        <strain>ATCC 204508 / S288c</strain>
    </source>
</reference>
<reference key="3">
    <citation type="journal article" date="2003" name="Genome Res.">
        <title>Systematic discovery of new genes in the Saccharomyces cerevisiae genome.</title>
        <authorList>
            <person name="Kessler M.M."/>
            <person name="Zeng Q."/>
            <person name="Hogan S."/>
            <person name="Cook R."/>
            <person name="Morales A.J."/>
            <person name="Cottarel G."/>
        </authorList>
    </citation>
    <scope>GENOME REANNOTATION</scope>
</reference>
<proteinExistence type="inferred from homology"/>
<protein>
    <recommendedName>
        <fullName>Uncharacterized protein YDR246W-A</fullName>
    </recommendedName>
</protein>